<evidence type="ECO:0000250" key="1"/>
<evidence type="ECO:0000255" key="2"/>
<evidence type="ECO:0000305" key="3"/>
<sequence>MLQIELQKWIQRFSSTIRLFFRLLIRLKTIKVNTNNLVEQIYIVGPGSLNITLLTACFISMVFTMQIAKEFLYLDAASAIGAVIVIAFTRELSPVLTAVIIAGKIGSSFTAEIATMETTEQIDALYLLNTNPIDYLVFPKVASCFLMLPILSIISLTASIAISLFVAFVMYDIPSSVFLKSAFNALSISDFLICLEKSMFFAIIIGFISCQWGLTSNGGAKGVGNSTTSSVVTILFTVFITDFVLSYFMFQTTGSSIAQANNI</sequence>
<geneLocation type="chloroplast"/>
<keyword id="KW-0150">Chloroplast</keyword>
<keyword id="KW-0472">Membrane</keyword>
<keyword id="KW-0934">Plastid</keyword>
<keyword id="KW-0812">Transmembrane</keyword>
<keyword id="KW-1133">Transmembrane helix</keyword>
<keyword id="KW-0813">Transport</keyword>
<comment type="function">
    <text evidence="1">Could be part of an ABC transporter complex.</text>
</comment>
<comment type="subcellular location">
    <subcellularLocation>
        <location evidence="3">Plastid</location>
        <location evidence="3">Chloroplast membrane</location>
        <topology evidence="3">Multi-pass membrane protein</topology>
    </subcellularLocation>
</comment>
<comment type="similarity">
    <text evidence="3">Belongs to the MlaE permease family.</text>
</comment>
<reference key="1">
    <citation type="submission" date="2003-11" db="EMBL/GenBank/DDBJ databases">
        <title>Whole genome sequence of Porphyra yezoensis chloroplast.</title>
        <authorList>
            <person name="Kunimoto M."/>
            <person name="Morishima K."/>
            <person name="Yoshikawa M."/>
            <person name="Fukuda S."/>
            <person name="Kobayashi T."/>
            <person name="Kobayashi M."/>
            <person name="Okazaki T."/>
            <person name="Ohara I."/>
            <person name="Nakayama I."/>
        </authorList>
    </citation>
    <scope>NUCLEOTIDE SEQUENCE [LARGE SCALE GENOMIC DNA]</scope>
    <source>
        <strain>U-51</strain>
    </source>
</reference>
<organism>
    <name type="scientific">Pyropia yezoensis</name>
    <name type="common">Susabi-nori</name>
    <name type="synonym">Porphyra yezoensis</name>
    <dbReference type="NCBI Taxonomy" id="2788"/>
    <lineage>
        <taxon>Eukaryota</taxon>
        <taxon>Rhodophyta</taxon>
        <taxon>Bangiophyceae</taxon>
        <taxon>Bangiales</taxon>
        <taxon>Bangiaceae</taxon>
        <taxon>Pyropia</taxon>
    </lineage>
</organism>
<proteinExistence type="inferred from homology"/>
<accession>Q1XD94</accession>
<name>YCF63_PYRYE</name>
<feature type="chain" id="PRO_0000277309" description="Probable ABC transporter permease protein ycf63">
    <location>
        <begin position="1"/>
        <end position="263"/>
    </location>
</feature>
<feature type="transmembrane region" description="Helical" evidence="2">
    <location>
        <begin position="43"/>
        <end position="63"/>
    </location>
</feature>
<feature type="transmembrane region" description="Helical" evidence="2">
    <location>
        <begin position="70"/>
        <end position="89"/>
    </location>
</feature>
<feature type="transmembrane region" description="Helical" evidence="2">
    <location>
        <begin position="150"/>
        <end position="170"/>
    </location>
</feature>
<feature type="transmembrane region" description="Helical" evidence="2">
    <location>
        <begin position="188"/>
        <end position="208"/>
    </location>
</feature>
<feature type="transmembrane region" description="Helical" evidence="2">
    <location>
        <begin position="230"/>
        <end position="250"/>
    </location>
</feature>
<protein>
    <recommendedName>
        <fullName>Probable ABC transporter permease protein ycf63</fullName>
    </recommendedName>
</protein>
<dbReference type="EMBL" id="AP006715">
    <property type="protein sequence ID" value="BAE92517.1"/>
    <property type="molecule type" value="Genomic_DNA"/>
</dbReference>
<dbReference type="RefSeq" id="YP_537074.1">
    <property type="nucleotide sequence ID" value="NC_007932.1"/>
</dbReference>
<dbReference type="SMR" id="Q1XD94"/>
<dbReference type="GO" id="GO:0043190">
    <property type="term" value="C:ATP-binding cassette (ABC) transporter complex"/>
    <property type="evidence" value="ECO:0007669"/>
    <property type="project" value="InterPro"/>
</dbReference>
<dbReference type="GO" id="GO:0031969">
    <property type="term" value="C:chloroplast membrane"/>
    <property type="evidence" value="ECO:0007669"/>
    <property type="project" value="UniProtKB-SubCell"/>
</dbReference>
<dbReference type="GO" id="GO:0005548">
    <property type="term" value="F:phospholipid transporter activity"/>
    <property type="evidence" value="ECO:0007669"/>
    <property type="project" value="TreeGrafter"/>
</dbReference>
<dbReference type="InterPro" id="IPR003453">
    <property type="entry name" value="ABC_MlaE_roteobac"/>
</dbReference>
<dbReference type="InterPro" id="IPR030802">
    <property type="entry name" value="Permease_MalE"/>
</dbReference>
<dbReference type="NCBIfam" id="TIGR00056">
    <property type="entry name" value="MlaE family lipid ABC transporter permease subunit"/>
    <property type="match status" value="1"/>
</dbReference>
<dbReference type="PANTHER" id="PTHR30188">
    <property type="entry name" value="ABC TRANSPORTER PERMEASE PROTEIN-RELATED"/>
    <property type="match status" value="1"/>
</dbReference>
<dbReference type="PANTHER" id="PTHR30188:SF4">
    <property type="entry name" value="PROTEIN TRIGALACTOSYLDIACYLGLYCEROL 1, CHLOROPLASTIC"/>
    <property type="match status" value="1"/>
</dbReference>
<dbReference type="Pfam" id="PF02405">
    <property type="entry name" value="MlaE"/>
    <property type="match status" value="1"/>
</dbReference>
<gene>
    <name type="primary">ycf63</name>
</gene>